<organism>
    <name type="scientific">Homo sapiens</name>
    <name type="common">Human</name>
    <dbReference type="NCBI Taxonomy" id="9606"/>
    <lineage>
        <taxon>Eukaryota</taxon>
        <taxon>Metazoa</taxon>
        <taxon>Chordata</taxon>
        <taxon>Craniata</taxon>
        <taxon>Vertebrata</taxon>
        <taxon>Euteleostomi</taxon>
        <taxon>Mammalia</taxon>
        <taxon>Eutheria</taxon>
        <taxon>Euarchontoglires</taxon>
        <taxon>Primates</taxon>
        <taxon>Haplorrhini</taxon>
        <taxon>Catarrhini</taxon>
        <taxon>Hominidae</taxon>
        <taxon>Homo</taxon>
    </lineage>
</organism>
<accession>P26012</accession>
<accession>A4D133</accession>
<accession>B4DHD4</accession>
<proteinExistence type="evidence at protein level"/>
<evidence type="ECO:0000250" key="1">
    <source>
        <dbReference type="UniProtKB" id="P05106"/>
    </source>
</evidence>
<evidence type="ECO:0000250" key="2">
    <source>
        <dbReference type="UniProtKB" id="Q0VBD0"/>
    </source>
</evidence>
<evidence type="ECO:0000255" key="3"/>
<evidence type="ECO:0000255" key="4">
    <source>
        <dbReference type="PROSITE-ProRule" id="PRU01392"/>
    </source>
</evidence>
<evidence type="ECO:0000269" key="5">
    <source>
    </source>
</evidence>
<evidence type="ECO:0000269" key="6">
    <source>
    </source>
</evidence>
<evidence type="ECO:0000269" key="7">
    <source>
    </source>
</evidence>
<evidence type="ECO:0000303" key="8">
    <source>
    </source>
</evidence>
<evidence type="ECO:0000305" key="9"/>
<evidence type="ECO:0000305" key="10">
    <source>
    </source>
</evidence>
<evidence type="ECO:0000305" key="11">
    <source>
    </source>
</evidence>
<evidence type="ECO:0000312" key="12">
    <source>
        <dbReference type="HGNC" id="HGNC:6163"/>
    </source>
</evidence>
<evidence type="ECO:0007744" key="13">
    <source>
        <dbReference type="PDB" id="6OM1"/>
    </source>
</evidence>
<evidence type="ECO:0007744" key="14">
    <source>
        <dbReference type="PDB" id="6OM2"/>
    </source>
</evidence>
<evidence type="ECO:0007744" key="15">
    <source>
        <dbReference type="PDB" id="6UJA"/>
    </source>
</evidence>
<evidence type="ECO:0007744" key="16">
    <source>
        <dbReference type="PDB" id="6UJB"/>
    </source>
</evidence>
<evidence type="ECO:0007744" key="17">
    <source>
        <dbReference type="PDB" id="6UJC"/>
    </source>
</evidence>
<evidence type="ECO:0007744" key="18">
    <source>
        <dbReference type="PDB" id="7Y1T"/>
    </source>
</evidence>
<evidence type="ECO:0007829" key="19">
    <source>
        <dbReference type="PDB" id="6OM1"/>
    </source>
</evidence>
<evidence type="ECO:0007829" key="20">
    <source>
        <dbReference type="PDB" id="6OM2"/>
    </source>
</evidence>
<evidence type="ECO:0007829" key="21">
    <source>
        <dbReference type="PDB" id="7Y1T"/>
    </source>
</evidence>
<evidence type="ECO:0007829" key="22">
    <source>
        <dbReference type="PDB" id="8TCF"/>
    </source>
</evidence>
<evidence type="ECO:0007829" key="23">
    <source>
        <dbReference type="PDB" id="8VS6"/>
    </source>
</evidence>
<gene>
    <name evidence="12" type="primary">ITGB8</name>
</gene>
<keyword id="KW-0002">3D-structure</keyword>
<keyword id="KW-0025">Alternative splicing</keyword>
<keyword id="KW-0106">Calcium</keyword>
<keyword id="KW-0130">Cell adhesion</keyword>
<keyword id="KW-1003">Cell membrane</keyword>
<keyword id="KW-1015">Disulfide bond</keyword>
<keyword id="KW-0245">EGF-like domain</keyword>
<keyword id="KW-0325">Glycoprotein</keyword>
<keyword id="KW-0401">Integrin</keyword>
<keyword id="KW-0460">Magnesium</keyword>
<keyword id="KW-0472">Membrane</keyword>
<keyword id="KW-0479">Metal-binding</keyword>
<keyword id="KW-1267">Proteomics identification</keyword>
<keyword id="KW-0675">Receptor</keyword>
<keyword id="KW-1185">Reference proteome</keyword>
<keyword id="KW-0677">Repeat</keyword>
<keyword id="KW-0732">Signal</keyword>
<keyword id="KW-0812">Transmembrane</keyword>
<keyword id="KW-1133">Transmembrane helix</keyword>
<comment type="function">
    <text evidence="2 5 10">Integrin alpha-V:beta-8 (ITGAV:ITGB8) is a receptor for fibronectin (PubMed:1918072). It recognizes the sequence R-G-D in its ligands (PubMed:1918072). Integrin alpha-V:beta-6 (ITGAV:ITGB6) mediates R-G-D-dependent release of transforming growth factor beta-1 (TGF-beta-1) from regulatory Latency-associated peptide (LAP), thereby playing a key role in TGF-beta-1 activation on the surface of activated regulatory T-cells (Tregs) (Probable). Required during vasculogenesis (By similarity).</text>
</comment>
<comment type="subunit">
    <text evidence="5 6">Heterodimer of an alpha and a beta subunit (PubMed:1918072). Beta-8 (ITGB8) associates with alpha-V (ITGAV) to form ITGAV:ITGB8 (PubMed:1918072, PubMed:22278742). ITGAV:ITGB8 interacts with TGFB1 (PubMed:22278742).</text>
</comment>
<comment type="subcellular location">
    <subcellularLocation>
        <location evidence="5">Cell membrane</location>
        <topology evidence="3">Single-pass type I membrane protein</topology>
    </subcellularLocation>
</comment>
<comment type="alternative products">
    <event type="alternative splicing"/>
    <isoform>
        <id>P26012-1</id>
        <name>1</name>
        <sequence type="displayed"/>
    </isoform>
    <isoform>
        <id>P26012-2</id>
        <name>2</name>
        <sequence type="described" ref="VSP_056531"/>
    </isoform>
</comment>
<comment type="tissue specificity">
    <text evidence="5">Placenta, kidney, brain, ovary, uterus and in several transformed cells. Transiently expressed in 293 human embryonic kidney cells.</text>
</comment>
<comment type="domain">
    <text evidence="7">The VWFA domain (or beta I domain) contains two cation-binding sites: the ligand-associated metal ion-binding site (LIMBS or SyMBS) and the metal ion-dependent adhesion site (MIDAS) (PubMed:31792290). Unlike in the other beta integrins, the cation-binding site adjacent MIDAS site (ADMIDAS) in ITGB8 is not functional due to the presence of two Asn residues instead of 2 Asp residues (PubMed:31792290). This domain is also part of the ligand-binding site (PubMed:31792290).</text>
</comment>
<comment type="similarity">
    <text evidence="9">Belongs to the integrin beta chain family.</text>
</comment>
<feature type="signal peptide" evidence="3">
    <location>
        <begin position="1"/>
        <end position="42"/>
    </location>
</feature>
<feature type="chain" id="PRO_0000016354" description="Integrin beta-8">
    <location>
        <begin position="43"/>
        <end position="769"/>
    </location>
</feature>
<feature type="topological domain" description="Extracellular" evidence="3">
    <location>
        <begin position="43"/>
        <end position="684"/>
    </location>
</feature>
<feature type="transmembrane region" description="Helical" evidence="3">
    <location>
        <begin position="685"/>
        <end position="704"/>
    </location>
</feature>
<feature type="topological domain" description="Cytoplasmic" evidence="3">
    <location>
        <begin position="705"/>
        <end position="769"/>
    </location>
</feature>
<feature type="domain" description="PSI" evidence="3">
    <location>
        <begin position="46"/>
        <end position="95"/>
    </location>
</feature>
<feature type="domain" description="VWFA" evidence="11">
    <location>
        <begin position="146"/>
        <end position="384"/>
    </location>
</feature>
<feature type="domain" description="I-EGF 1" evidence="9">
    <location>
        <begin position="471"/>
        <end position="495"/>
    </location>
</feature>
<feature type="domain" description="I-EGF 2" evidence="4">
    <location>
        <begin position="499"/>
        <end position="547"/>
    </location>
</feature>
<feature type="domain" description="I-EGF 3" evidence="4">
    <location>
        <begin position="548"/>
        <end position="584"/>
    </location>
</feature>
<feature type="domain" description="I-EGF 4" evidence="4">
    <location>
        <begin position="585"/>
        <end position="625"/>
    </location>
</feature>
<feature type="binding site" description="in MIDAS binding site" evidence="7 13 14">
    <location>
        <position position="154"/>
    </location>
    <ligand>
        <name>Mg(2+)</name>
        <dbReference type="ChEBI" id="CHEBI:18420"/>
    </ligand>
</feature>
<feature type="binding site" description="in MIDAS binding site" evidence="7 14">
    <location>
        <position position="156"/>
    </location>
    <ligand>
        <name>Mg(2+)</name>
        <dbReference type="ChEBI" id="CHEBI:18420"/>
    </ligand>
</feature>
<feature type="binding site" description="in LIMBS binding site" evidence="7 13 14">
    <location>
        <position position="193"/>
    </location>
    <ligand>
        <name>Ca(2+)</name>
        <dbReference type="ChEBI" id="CHEBI:29108"/>
    </ligand>
</feature>
<feature type="binding site" description="in LIMBS binding site" evidence="7 13 14">
    <location>
        <position position="249"/>
    </location>
    <ligand>
        <name>Ca(2+)</name>
        <dbReference type="ChEBI" id="CHEBI:29108"/>
    </ligand>
</feature>
<feature type="binding site" description="in LIMBS binding site" evidence="7 13 14">
    <location>
        <position position="251"/>
    </location>
    <ligand>
        <name>Ca(2+)</name>
        <dbReference type="ChEBI" id="CHEBI:29108"/>
    </ligand>
</feature>
<feature type="binding site" description="in LIMBS binding site" evidence="7 13 14">
    <location>
        <position position="253"/>
    </location>
    <ligand>
        <name>Ca(2+)</name>
        <dbReference type="ChEBI" id="CHEBI:29108"/>
    </ligand>
</feature>
<feature type="binding site" description="in LIMBS binding site" evidence="7 13 14">
    <location>
        <position position="254"/>
    </location>
    <ligand>
        <name>Ca(2+)</name>
        <dbReference type="ChEBI" id="CHEBI:29108"/>
    </ligand>
</feature>
<feature type="binding site" description="in MIDAS binding site" evidence="7 13 14">
    <location>
        <position position="254"/>
    </location>
    <ligand>
        <name>Mg(2+)</name>
        <dbReference type="ChEBI" id="CHEBI:18420"/>
    </ligand>
</feature>
<feature type="glycosylation site" description="N-linked (GlcNAc...) asparagine" evidence="3">
    <location>
        <position position="233"/>
    </location>
</feature>
<feature type="glycosylation site" description="N-linked (GlcNAc...) asparagine" evidence="7 13">
    <location>
        <position position="402"/>
    </location>
</feature>
<feature type="glycosylation site" description="N-linked (GlcNAc...) asparagine" evidence="7 13">
    <location>
        <position position="421"/>
    </location>
</feature>
<feature type="glycosylation site" description="N-linked (GlcNAc...) asparagine" evidence="7 13 14">
    <location>
        <position position="431"/>
    </location>
</feature>
<feature type="glycosylation site" description="N-linked (GlcNAc...) asparagine" evidence="3">
    <location>
        <position position="456"/>
    </location>
</feature>
<feature type="glycosylation site" description="N-linked (GlcNAc...) asparagine" evidence="3">
    <location>
        <position position="466"/>
    </location>
</feature>
<feature type="glycosylation site" description="N-linked (GlcNAc...) asparagine" evidence="3">
    <location>
        <position position="648"/>
    </location>
</feature>
<feature type="disulfide bond" evidence="1">
    <location>
        <begin position="47"/>
        <end position="65"/>
    </location>
</feature>
<feature type="disulfide bond" evidence="1">
    <location>
        <begin position="55"/>
        <end position="469"/>
    </location>
</feature>
<feature type="disulfide bond" evidence="1">
    <location>
        <begin position="58"/>
        <end position="83"/>
    </location>
</feature>
<feature type="disulfide bond" evidence="1">
    <location>
        <begin position="68"/>
        <end position="94"/>
    </location>
</feature>
<feature type="disulfide bond" evidence="13 14 15 16 17 18">
    <location>
        <begin position="211"/>
        <end position="218"/>
    </location>
</feature>
<feature type="disulfide bond" evidence="13 14 15 16 17 18">
    <location>
        <begin position="266"/>
        <end position="307"/>
    </location>
</feature>
<feature type="disulfide bond" evidence="13 14 15 16 17 18">
    <location>
        <begin position="407"/>
        <end position="419"/>
    </location>
</feature>
<feature type="disulfide bond" evidence="13 15 16 17">
    <location>
        <begin position="439"/>
        <end position="467"/>
    </location>
</feature>
<feature type="disulfide bond" evidence="1">
    <location>
        <begin position="471"/>
        <end position="494"/>
    </location>
</feature>
<feature type="disulfide bond" evidence="9">
    <location>
        <begin position="471"/>
        <end position="491"/>
    </location>
</feature>
<feature type="disulfide bond" evidence="9">
    <location>
        <begin position="481"/>
        <end position="494"/>
    </location>
</feature>
<feature type="disulfide bond" evidence="4">
    <location>
        <begin position="499"/>
        <end position="528"/>
    </location>
</feature>
<feature type="disulfide bond" evidence="4">
    <location>
        <begin position="511"/>
        <end position="526"/>
    </location>
</feature>
<feature type="disulfide bond" evidence="4">
    <location>
        <begin position="520"/>
        <end position="531"/>
    </location>
</feature>
<feature type="disulfide bond" evidence="4">
    <location>
        <begin position="533"/>
        <end position="546"/>
    </location>
</feature>
<feature type="disulfide bond" evidence="4">
    <location>
        <begin position="553"/>
        <end position="567"/>
    </location>
</feature>
<feature type="disulfide bond" evidence="4">
    <location>
        <begin position="561"/>
        <end position="572"/>
    </location>
</feature>
<feature type="disulfide bond" evidence="4">
    <location>
        <begin position="574"/>
        <end position="583"/>
    </location>
</feature>
<feature type="disulfide bond" evidence="4">
    <location>
        <begin position="585"/>
        <end position="609"/>
    </location>
</feature>
<feature type="disulfide bond" evidence="4">
    <location>
        <begin position="593"/>
        <end position="607"/>
    </location>
</feature>
<feature type="disulfide bond" evidence="4">
    <location>
        <begin position="601"/>
        <end position="612"/>
    </location>
</feature>
<feature type="disulfide bond" evidence="4">
    <location>
        <begin position="614"/>
        <end position="624"/>
    </location>
</feature>
<feature type="disulfide bond" evidence="1">
    <location>
        <begin position="627"/>
        <end position="630"/>
    </location>
</feature>
<feature type="disulfide bond" evidence="1">
    <location>
        <begin position="634"/>
        <end position="661"/>
    </location>
</feature>
<feature type="disulfide bond" evidence="1">
    <location>
        <begin position="640"/>
        <end position="657"/>
    </location>
</feature>
<feature type="splice variant" id="VSP_056531" description="In isoform 2." evidence="8">
    <location>
        <begin position="1"/>
        <end position="135"/>
    </location>
</feature>
<feature type="sequence variant" id="VAR_034028" description="In dbSNP:rs5002476.">
    <original>S</original>
    <variation>F</variation>
    <location>
        <position position="552"/>
    </location>
</feature>
<feature type="strand" evidence="22">
    <location>
        <begin position="105"/>
        <end position="107"/>
    </location>
</feature>
<feature type="strand" evidence="19">
    <location>
        <begin position="117"/>
        <end position="124"/>
    </location>
</feature>
<feature type="strand" evidence="19">
    <location>
        <begin position="135"/>
        <end position="139"/>
    </location>
</feature>
<feature type="strand" evidence="19">
    <location>
        <begin position="147"/>
        <end position="154"/>
    </location>
</feature>
<feature type="helix" evidence="19">
    <location>
        <begin position="157"/>
        <end position="159"/>
    </location>
</feature>
<feature type="helix" evidence="19">
    <location>
        <begin position="160"/>
        <end position="165"/>
    </location>
</feature>
<feature type="helix" evidence="21">
    <location>
        <begin position="166"/>
        <end position="168"/>
    </location>
</feature>
<feature type="helix" evidence="19">
    <location>
        <begin position="170"/>
        <end position="180"/>
    </location>
</feature>
<feature type="strand" evidence="19">
    <location>
        <begin position="182"/>
        <end position="191"/>
    </location>
</feature>
<feature type="turn" evidence="19">
    <location>
        <begin position="197"/>
        <end position="199"/>
    </location>
</feature>
<feature type="helix" evidence="23">
    <location>
        <begin position="204"/>
        <end position="208"/>
    </location>
</feature>
<feature type="turn" evidence="23">
    <location>
        <begin position="210"/>
        <end position="215"/>
    </location>
</feature>
<feature type="strand" evidence="19">
    <location>
        <begin position="223"/>
        <end position="232"/>
    </location>
</feature>
<feature type="helix" evidence="19">
    <location>
        <begin position="235"/>
        <end position="242"/>
    </location>
</feature>
<feature type="strand" evidence="19">
    <location>
        <begin position="250"/>
        <end position="254"/>
    </location>
</feature>
<feature type="helix" evidence="19">
    <location>
        <begin position="256"/>
        <end position="265"/>
    </location>
</feature>
<feature type="helix" evidence="19">
    <location>
        <begin position="267"/>
        <end position="270"/>
    </location>
</feature>
<feature type="strand" evidence="19">
    <location>
        <begin position="274"/>
        <end position="283"/>
    </location>
</feature>
<feature type="helix" evidence="19">
    <location>
        <begin position="292"/>
        <end position="297"/>
    </location>
</feature>
<feature type="strand" evidence="19">
    <location>
        <begin position="309"/>
        <end position="314"/>
    </location>
</feature>
<feature type="turn" evidence="19">
    <location>
        <begin position="315"/>
        <end position="319"/>
    </location>
</feature>
<feature type="helix" evidence="19">
    <location>
        <begin position="325"/>
        <end position="335"/>
    </location>
</feature>
<feature type="strand" evidence="19">
    <location>
        <begin position="337"/>
        <end position="343"/>
    </location>
</feature>
<feature type="helix" evidence="19">
    <location>
        <begin position="348"/>
        <end position="353"/>
    </location>
</feature>
<feature type="helix" evidence="19">
    <location>
        <begin position="355"/>
        <end position="357"/>
    </location>
</feature>
<feature type="strand" evidence="19">
    <location>
        <begin position="361"/>
        <end position="365"/>
    </location>
</feature>
<feature type="helix" evidence="19">
    <location>
        <begin position="373"/>
        <end position="384"/>
    </location>
</feature>
<feature type="strand" evidence="19">
    <location>
        <begin position="390"/>
        <end position="393"/>
    </location>
</feature>
<feature type="strand" evidence="20">
    <location>
        <begin position="396"/>
        <end position="398"/>
    </location>
</feature>
<feature type="strand" evidence="19">
    <location>
        <begin position="400"/>
        <end position="406"/>
    </location>
</feature>
<feature type="strand" evidence="19">
    <location>
        <begin position="408"/>
        <end position="410"/>
    </location>
</feature>
<feature type="strand" evidence="20">
    <location>
        <begin position="412"/>
        <end position="414"/>
    </location>
</feature>
<feature type="strand" evidence="23">
    <location>
        <begin position="415"/>
        <end position="417"/>
    </location>
</feature>
<feature type="strand" evidence="23">
    <location>
        <begin position="419"/>
        <end position="421"/>
    </location>
</feature>
<feature type="strand" evidence="19">
    <location>
        <begin position="424"/>
        <end position="426"/>
    </location>
</feature>
<feature type="strand" evidence="19">
    <location>
        <begin position="428"/>
        <end position="435"/>
    </location>
</feature>
<feature type="strand" evidence="19">
    <location>
        <begin position="448"/>
        <end position="452"/>
    </location>
</feature>
<feature type="strand" evidence="19">
    <location>
        <begin position="459"/>
        <end position="462"/>
    </location>
</feature>
<dbReference type="EMBL" id="M73780">
    <property type="protein sequence ID" value="AAA36034.1"/>
    <property type="molecule type" value="mRNA"/>
</dbReference>
<dbReference type="EMBL" id="AK295044">
    <property type="protein sequence ID" value="BAG58095.1"/>
    <property type="molecule type" value="mRNA"/>
</dbReference>
<dbReference type="EMBL" id="AC004130">
    <property type="protein sequence ID" value="AAQ96845.1"/>
    <property type="molecule type" value="Genomic_DNA"/>
</dbReference>
<dbReference type="EMBL" id="CH236948">
    <property type="protein sequence ID" value="EAL24275.1"/>
    <property type="molecule type" value="Genomic_DNA"/>
</dbReference>
<dbReference type="EMBL" id="CH471073">
    <property type="protein sequence ID" value="EAW93725.1"/>
    <property type="molecule type" value="Genomic_DNA"/>
</dbReference>
<dbReference type="CCDS" id="CCDS5370.1">
    <molecule id="P26012-1"/>
</dbReference>
<dbReference type="PIR" id="A41029">
    <property type="entry name" value="A41029"/>
</dbReference>
<dbReference type="RefSeq" id="NP_002205.1">
    <molecule id="P26012-1"/>
    <property type="nucleotide sequence ID" value="NM_002214.3"/>
</dbReference>
<dbReference type="RefSeq" id="XP_011513698.1">
    <property type="nucleotide sequence ID" value="XM_011515396.1"/>
</dbReference>
<dbReference type="RefSeq" id="XP_016867667.1">
    <molecule id="P26012-1"/>
    <property type="nucleotide sequence ID" value="XM_017012178.2"/>
</dbReference>
<dbReference type="RefSeq" id="XP_016867668.1">
    <molecule id="P26012-1"/>
    <property type="nucleotide sequence ID" value="XM_017012179.2"/>
</dbReference>
<dbReference type="RefSeq" id="XP_016867669.1">
    <molecule id="P26012-2"/>
    <property type="nucleotide sequence ID" value="XM_017012180.2"/>
</dbReference>
<dbReference type="RefSeq" id="XP_016867670.1">
    <property type="nucleotide sequence ID" value="XM_017012181.1"/>
</dbReference>
<dbReference type="RefSeq" id="XP_016867671.1">
    <molecule id="P26012-2"/>
    <property type="nucleotide sequence ID" value="XM_017012182.2"/>
</dbReference>
<dbReference type="RefSeq" id="XP_016867672.1">
    <molecule id="P26012-2"/>
    <property type="nucleotide sequence ID" value="XM_017012183.2"/>
</dbReference>
<dbReference type="RefSeq" id="XP_047276297.1">
    <molecule id="P26012-2"/>
    <property type="nucleotide sequence ID" value="XM_047420341.1"/>
</dbReference>
<dbReference type="RefSeq" id="XP_047276298.1">
    <molecule id="P26012-2"/>
    <property type="nucleotide sequence ID" value="XM_047420342.1"/>
</dbReference>
<dbReference type="RefSeq" id="XP_047276299.1">
    <molecule id="P26012-2"/>
    <property type="nucleotide sequence ID" value="XM_047420343.1"/>
</dbReference>
<dbReference type="RefSeq" id="XP_047276300.1">
    <molecule id="P26012-2"/>
    <property type="nucleotide sequence ID" value="XM_047420344.1"/>
</dbReference>
<dbReference type="RefSeq" id="XP_047276301.1">
    <molecule id="P26012-2"/>
    <property type="nucleotide sequence ID" value="XM_047420345.1"/>
</dbReference>
<dbReference type="RefSeq" id="XP_054214137.1">
    <molecule id="P26012-2"/>
    <property type="nucleotide sequence ID" value="XM_054358162.1"/>
</dbReference>
<dbReference type="RefSeq" id="XP_054214138.1">
    <molecule id="P26012-2"/>
    <property type="nucleotide sequence ID" value="XM_054358163.1"/>
</dbReference>
<dbReference type="RefSeq" id="XP_054214139.1">
    <molecule id="P26012-2"/>
    <property type="nucleotide sequence ID" value="XM_054358164.1"/>
</dbReference>
<dbReference type="RefSeq" id="XP_054214140.1">
    <molecule id="P26012-2"/>
    <property type="nucleotide sequence ID" value="XM_054358165.1"/>
</dbReference>
<dbReference type="PDB" id="6DJP">
    <property type="method" value="EM"/>
    <property type="resolution" value="4.80 A"/>
    <property type="chains" value="B=43-681"/>
</dbReference>
<dbReference type="PDB" id="6OM1">
    <property type="method" value="X-ray"/>
    <property type="resolution" value="2.66 A"/>
    <property type="chains" value="B/D/F/H=43-498"/>
</dbReference>
<dbReference type="PDB" id="6OM2">
    <property type="method" value="X-ray"/>
    <property type="resolution" value="2.77 A"/>
    <property type="chains" value="B/D=43-463"/>
</dbReference>
<dbReference type="PDB" id="6UJA">
    <property type="method" value="EM"/>
    <property type="resolution" value="3.30 A"/>
    <property type="chains" value="B=43-769"/>
</dbReference>
<dbReference type="PDB" id="6UJB">
    <property type="method" value="EM"/>
    <property type="resolution" value="3.51 A"/>
    <property type="chains" value="B=43-769"/>
</dbReference>
<dbReference type="PDB" id="6UJC">
    <property type="method" value="EM"/>
    <property type="resolution" value="3.56 A"/>
    <property type="chains" value="B=43-769"/>
</dbReference>
<dbReference type="PDB" id="7Y1T">
    <property type="method" value="EM"/>
    <property type="resolution" value="3.24 A"/>
    <property type="chains" value="B=43-498"/>
</dbReference>
<dbReference type="PDB" id="8TCF">
    <property type="method" value="EM"/>
    <property type="resolution" value="2.90 A"/>
    <property type="chains" value="B=104-467"/>
</dbReference>
<dbReference type="PDB" id="8VS6">
    <property type="method" value="EM"/>
    <property type="resolution" value="2.73 A"/>
    <property type="chains" value="B=43-684"/>
</dbReference>
<dbReference type="PDB" id="8VSD">
    <property type="method" value="EM"/>
    <property type="resolution" value="3.20 A"/>
    <property type="chains" value="B=114-467"/>
</dbReference>
<dbReference type="PDB" id="9IND">
    <property type="method" value="EM"/>
    <property type="resolution" value="2.88 A"/>
    <property type="chains" value="B=112-463"/>
</dbReference>
<dbReference type="PDBsum" id="6DJP"/>
<dbReference type="PDBsum" id="6OM1"/>
<dbReference type="PDBsum" id="6OM2"/>
<dbReference type="PDBsum" id="6UJA"/>
<dbReference type="PDBsum" id="6UJB"/>
<dbReference type="PDBsum" id="6UJC"/>
<dbReference type="PDBsum" id="7Y1T"/>
<dbReference type="PDBsum" id="8TCF"/>
<dbReference type="PDBsum" id="8VS6"/>
<dbReference type="PDBsum" id="8VSD"/>
<dbReference type="PDBsum" id="9IND"/>
<dbReference type="EMDB" id="EMD-20794"/>
<dbReference type="EMDB" id="EMD-20795"/>
<dbReference type="EMDB" id="EMD-20796"/>
<dbReference type="EMDB" id="EMD-33572"/>
<dbReference type="EMDB" id="EMD-33573"/>
<dbReference type="EMDB" id="EMD-41153"/>
<dbReference type="EMDB" id="EMD-43489"/>
<dbReference type="EMDB" id="EMD-43494"/>
<dbReference type="EMDB" id="EMD-60703"/>
<dbReference type="EMDB" id="EMD-7939"/>
<dbReference type="SMR" id="P26012"/>
<dbReference type="BioGRID" id="109902">
    <property type="interactions" value="39"/>
</dbReference>
<dbReference type="ComplexPortal" id="CPX-1821">
    <property type="entry name" value="Integrin alphav-beta8 complex"/>
</dbReference>
<dbReference type="CORUM" id="P26012"/>
<dbReference type="FunCoup" id="P26012">
    <property type="interactions" value="762"/>
</dbReference>
<dbReference type="IntAct" id="P26012">
    <property type="interactions" value="24"/>
</dbReference>
<dbReference type="MINT" id="P26012"/>
<dbReference type="STRING" id="9606.ENSP00000222573"/>
<dbReference type="BindingDB" id="P26012"/>
<dbReference type="ChEMBL" id="CHEMBL3430892"/>
<dbReference type="GuidetoPHARMACOLOGY" id="2462"/>
<dbReference type="GlyCosmos" id="P26012">
    <property type="glycosylation" value="7 sites, No reported glycans"/>
</dbReference>
<dbReference type="GlyGen" id="P26012">
    <property type="glycosylation" value="8 sites, 9 N-linked glycans (3 sites)"/>
</dbReference>
<dbReference type="iPTMnet" id="P26012"/>
<dbReference type="PhosphoSitePlus" id="P26012"/>
<dbReference type="BioMuta" id="ITGB8"/>
<dbReference type="DMDM" id="124975"/>
<dbReference type="CPTAC" id="CPTAC-1311"/>
<dbReference type="jPOST" id="P26012"/>
<dbReference type="MassIVE" id="P26012"/>
<dbReference type="PaxDb" id="9606-ENSP00000222573"/>
<dbReference type="PeptideAtlas" id="P26012"/>
<dbReference type="ProteomicsDB" id="4212"/>
<dbReference type="ProteomicsDB" id="54309">
    <molecule id="P26012-1"/>
</dbReference>
<dbReference type="Pumba" id="P26012"/>
<dbReference type="ABCD" id="P26012">
    <property type="antibodies" value="21 sequenced antibodies"/>
</dbReference>
<dbReference type="Antibodypedia" id="25377">
    <property type="antibodies" value="187 antibodies from 29 providers"/>
</dbReference>
<dbReference type="DNASU" id="3696"/>
<dbReference type="Ensembl" id="ENST00000222573.5">
    <molecule id="P26012-1"/>
    <property type="protein sequence ID" value="ENSP00000222573.3"/>
    <property type="gene ID" value="ENSG00000105855.10"/>
</dbReference>
<dbReference type="Ensembl" id="ENST00000537992.5">
    <molecule id="P26012-2"/>
    <property type="protein sequence ID" value="ENSP00000441561.1"/>
    <property type="gene ID" value="ENSG00000105855.10"/>
</dbReference>
<dbReference type="GeneID" id="3696"/>
<dbReference type="KEGG" id="hsa:3696"/>
<dbReference type="MANE-Select" id="ENST00000222573.5">
    <property type="protein sequence ID" value="ENSP00000222573.3"/>
    <property type="RefSeq nucleotide sequence ID" value="NM_002214.3"/>
    <property type="RefSeq protein sequence ID" value="NP_002205.1"/>
</dbReference>
<dbReference type="UCSC" id="uc003suu.4">
    <molecule id="P26012-1"/>
    <property type="organism name" value="human"/>
</dbReference>
<dbReference type="AGR" id="HGNC:6163"/>
<dbReference type="CTD" id="3696"/>
<dbReference type="DisGeNET" id="3696"/>
<dbReference type="GeneCards" id="ITGB8"/>
<dbReference type="HGNC" id="HGNC:6163">
    <property type="gene designation" value="ITGB8"/>
</dbReference>
<dbReference type="HPA" id="ENSG00000105855">
    <property type="expression patterns" value="Low tissue specificity"/>
</dbReference>
<dbReference type="MIM" id="604160">
    <property type="type" value="gene"/>
</dbReference>
<dbReference type="neXtProt" id="NX_P26012"/>
<dbReference type="OpenTargets" id="ENSG00000105855"/>
<dbReference type="PharmGKB" id="PA29962"/>
<dbReference type="VEuPathDB" id="HostDB:ENSG00000105855"/>
<dbReference type="eggNOG" id="KOG1226">
    <property type="taxonomic scope" value="Eukaryota"/>
</dbReference>
<dbReference type="GeneTree" id="ENSGT01110000267169"/>
<dbReference type="HOGENOM" id="CLU_011772_3_1_1"/>
<dbReference type="InParanoid" id="P26012"/>
<dbReference type="OMA" id="NCRRGPA"/>
<dbReference type="OrthoDB" id="410592at2759"/>
<dbReference type="PAN-GO" id="P26012">
    <property type="GO annotations" value="7 GO annotations based on evolutionary models"/>
</dbReference>
<dbReference type="PhylomeDB" id="P26012"/>
<dbReference type="TreeFam" id="TF105392"/>
<dbReference type="PathwayCommons" id="P26012"/>
<dbReference type="Reactome" id="R-HSA-2129379">
    <property type="pathway name" value="Molecules associated with elastic fibres"/>
</dbReference>
<dbReference type="Reactome" id="R-HSA-216083">
    <property type="pathway name" value="Integrin cell surface interactions"/>
</dbReference>
<dbReference type="Reactome" id="R-HSA-2173789">
    <property type="pathway name" value="TGF-beta receptor signaling activates SMADs"/>
</dbReference>
<dbReference type="SignaLink" id="P26012"/>
<dbReference type="SIGNOR" id="P26012"/>
<dbReference type="BioGRID-ORCS" id="3696">
    <property type="hits" value="13 hits in 1147 CRISPR screens"/>
</dbReference>
<dbReference type="ChiTaRS" id="ITGB8">
    <property type="organism name" value="human"/>
</dbReference>
<dbReference type="GeneWiki" id="ITGB8"/>
<dbReference type="GenomeRNAi" id="3696"/>
<dbReference type="Pharos" id="P26012">
    <property type="development level" value="Tbio"/>
</dbReference>
<dbReference type="PRO" id="PR:P26012"/>
<dbReference type="Proteomes" id="UP000005640">
    <property type="component" value="Chromosome 7"/>
</dbReference>
<dbReference type="RNAct" id="P26012">
    <property type="molecule type" value="protein"/>
</dbReference>
<dbReference type="Bgee" id="ENSG00000105855">
    <property type="expression patterns" value="Expressed in pigmented layer of retina and 179 other cell types or tissues"/>
</dbReference>
<dbReference type="GO" id="GO:0009986">
    <property type="term" value="C:cell surface"/>
    <property type="evidence" value="ECO:0000314"/>
    <property type="project" value="UniProtKB"/>
</dbReference>
<dbReference type="GO" id="GO:0070062">
    <property type="term" value="C:extracellular exosome"/>
    <property type="evidence" value="ECO:0007005"/>
    <property type="project" value="UniProtKB"/>
</dbReference>
<dbReference type="GO" id="GO:0005925">
    <property type="term" value="C:focal adhesion"/>
    <property type="evidence" value="ECO:0000318"/>
    <property type="project" value="GO_Central"/>
</dbReference>
<dbReference type="GO" id="GO:0034686">
    <property type="term" value="C:integrin alphav-beta8 complex"/>
    <property type="evidence" value="ECO:0000314"/>
    <property type="project" value="UniProtKB"/>
</dbReference>
<dbReference type="GO" id="GO:0008305">
    <property type="term" value="C:integrin complex"/>
    <property type="evidence" value="ECO:0000318"/>
    <property type="project" value="GO_Central"/>
</dbReference>
<dbReference type="GO" id="GO:0005886">
    <property type="term" value="C:plasma membrane"/>
    <property type="evidence" value="ECO:0000304"/>
    <property type="project" value="Reactome"/>
</dbReference>
<dbReference type="GO" id="GO:1990430">
    <property type="term" value="F:extracellular matrix protein binding"/>
    <property type="evidence" value="ECO:0000314"/>
    <property type="project" value="UniProtKB"/>
</dbReference>
<dbReference type="GO" id="GO:0005178">
    <property type="term" value="F:integrin binding"/>
    <property type="evidence" value="ECO:0000318"/>
    <property type="project" value="GO_Central"/>
</dbReference>
<dbReference type="GO" id="GO:0046872">
    <property type="term" value="F:metal ion binding"/>
    <property type="evidence" value="ECO:0007669"/>
    <property type="project" value="UniProtKB-KW"/>
</dbReference>
<dbReference type="GO" id="GO:0051216">
    <property type="term" value="P:cartilage development"/>
    <property type="evidence" value="ECO:0000315"/>
    <property type="project" value="UniProtKB"/>
</dbReference>
<dbReference type="GO" id="GO:0007155">
    <property type="term" value="P:cell adhesion"/>
    <property type="evidence" value="ECO:0000304"/>
    <property type="project" value="ProtInc"/>
</dbReference>
<dbReference type="GO" id="GO:0033627">
    <property type="term" value="P:cell adhesion mediated by integrin"/>
    <property type="evidence" value="ECO:0000318"/>
    <property type="project" value="GO_Central"/>
</dbReference>
<dbReference type="GO" id="GO:0016477">
    <property type="term" value="P:cell migration"/>
    <property type="evidence" value="ECO:0000318"/>
    <property type="project" value="GO_Central"/>
</dbReference>
<dbReference type="GO" id="GO:0098609">
    <property type="term" value="P:cell-cell adhesion"/>
    <property type="evidence" value="ECO:0000318"/>
    <property type="project" value="GO_Central"/>
</dbReference>
<dbReference type="GO" id="GO:0007160">
    <property type="term" value="P:cell-matrix adhesion"/>
    <property type="evidence" value="ECO:0000303"/>
    <property type="project" value="ComplexPortal"/>
</dbReference>
<dbReference type="GO" id="GO:0001573">
    <property type="term" value="P:ganglioside metabolic process"/>
    <property type="evidence" value="ECO:0007669"/>
    <property type="project" value="Ensembl"/>
</dbReference>
<dbReference type="GO" id="GO:0060022">
    <property type="term" value="P:hard palate development"/>
    <property type="evidence" value="ECO:0007669"/>
    <property type="project" value="Ensembl"/>
</dbReference>
<dbReference type="GO" id="GO:0006955">
    <property type="term" value="P:immune response"/>
    <property type="evidence" value="ECO:0007669"/>
    <property type="project" value="Ensembl"/>
</dbReference>
<dbReference type="GO" id="GO:0007229">
    <property type="term" value="P:integrin-mediated signaling pathway"/>
    <property type="evidence" value="ECO:0000314"/>
    <property type="project" value="ComplexPortal"/>
</dbReference>
<dbReference type="GO" id="GO:0061520">
    <property type="term" value="P:Langerhans cell differentiation"/>
    <property type="evidence" value="ECO:0007669"/>
    <property type="project" value="Ensembl"/>
</dbReference>
<dbReference type="GO" id="GO:0010629">
    <property type="term" value="P:negative regulation of gene expression"/>
    <property type="evidence" value="ECO:0000315"/>
    <property type="project" value="UniProtKB"/>
</dbReference>
<dbReference type="GO" id="GO:0060674">
    <property type="term" value="P:placenta blood vessel development"/>
    <property type="evidence" value="ECO:0000304"/>
    <property type="project" value="BHF-UCL"/>
</dbReference>
<dbReference type="GO" id="GO:0045766">
    <property type="term" value="P:positive regulation of angiogenesis"/>
    <property type="evidence" value="ECO:0000315"/>
    <property type="project" value="BHF-UCL"/>
</dbReference>
<dbReference type="GO" id="GO:0010628">
    <property type="term" value="P:positive regulation of gene expression"/>
    <property type="evidence" value="ECO:0000315"/>
    <property type="project" value="UniProtKB"/>
</dbReference>
<dbReference type="GO" id="GO:0009615">
    <property type="term" value="P:response to virus"/>
    <property type="evidence" value="ECO:0007669"/>
    <property type="project" value="Ensembl"/>
</dbReference>
<dbReference type="GO" id="GO:0007179">
    <property type="term" value="P:transforming growth factor beta receptor signaling pathway"/>
    <property type="evidence" value="ECO:0007669"/>
    <property type="project" value="Ensembl"/>
</dbReference>
<dbReference type="GO" id="GO:0001570">
    <property type="term" value="P:vasculogenesis"/>
    <property type="evidence" value="ECO:0000315"/>
    <property type="project" value="UniProtKB"/>
</dbReference>
<dbReference type="FunFam" id="2.10.25.10:FF:000076">
    <property type="entry name" value="Integrin beta"/>
    <property type="match status" value="1"/>
</dbReference>
<dbReference type="FunFam" id="2.10.25.10:FF:000370">
    <property type="entry name" value="Integrin beta"/>
    <property type="match status" value="1"/>
</dbReference>
<dbReference type="FunFam" id="2.60.40.1510:FF:000010">
    <property type="entry name" value="Integrin beta"/>
    <property type="match status" value="1"/>
</dbReference>
<dbReference type="FunFam" id="3.30.1680.10:FF:000002">
    <property type="entry name" value="Integrin beta"/>
    <property type="match status" value="1"/>
</dbReference>
<dbReference type="FunFam" id="3.40.50.410:FF:000002">
    <property type="entry name" value="Integrin beta"/>
    <property type="match status" value="1"/>
</dbReference>
<dbReference type="Gene3D" id="2.10.25.10">
    <property type="entry name" value="Laminin"/>
    <property type="match status" value="3"/>
</dbReference>
<dbReference type="Gene3D" id="3.30.1680.10">
    <property type="entry name" value="ligand-binding face of the semaphorins, domain 2"/>
    <property type="match status" value="1"/>
</dbReference>
<dbReference type="Gene3D" id="2.60.40.1510">
    <property type="entry name" value="ntegrin, alpha v. Chain A, domain 3"/>
    <property type="match status" value="1"/>
</dbReference>
<dbReference type="Gene3D" id="3.40.50.410">
    <property type="entry name" value="von Willebrand factor, type A domain"/>
    <property type="match status" value="1"/>
</dbReference>
<dbReference type="InterPro" id="IPR000742">
    <property type="entry name" value="EGF-like_dom"/>
</dbReference>
<dbReference type="InterPro" id="IPR033760">
    <property type="entry name" value="Integrin_beta_N"/>
</dbReference>
<dbReference type="InterPro" id="IPR015812">
    <property type="entry name" value="Integrin_bsu"/>
</dbReference>
<dbReference type="InterPro" id="IPR002369">
    <property type="entry name" value="Integrin_bsu_VWA"/>
</dbReference>
<dbReference type="InterPro" id="IPR032695">
    <property type="entry name" value="Integrin_dom_sf"/>
</dbReference>
<dbReference type="InterPro" id="IPR016201">
    <property type="entry name" value="PSI"/>
</dbReference>
<dbReference type="InterPro" id="IPR036465">
    <property type="entry name" value="vWFA_dom_sf"/>
</dbReference>
<dbReference type="PANTHER" id="PTHR10082">
    <property type="entry name" value="INTEGRIN BETA SUBUNIT"/>
    <property type="match status" value="1"/>
</dbReference>
<dbReference type="PANTHER" id="PTHR10082:SF9">
    <property type="entry name" value="INTEGRIN BETA-8"/>
    <property type="match status" value="1"/>
</dbReference>
<dbReference type="Pfam" id="PF23105">
    <property type="entry name" value="EGF_integrin"/>
    <property type="match status" value="1"/>
</dbReference>
<dbReference type="Pfam" id="PF23106">
    <property type="entry name" value="EGF_Teneurin"/>
    <property type="match status" value="1"/>
</dbReference>
<dbReference type="Pfam" id="PF00362">
    <property type="entry name" value="Integrin_beta"/>
    <property type="match status" value="1"/>
</dbReference>
<dbReference type="Pfam" id="PF17205">
    <property type="entry name" value="PSI_integrin"/>
    <property type="match status" value="1"/>
</dbReference>
<dbReference type="PIRSF" id="PIRSF002512">
    <property type="entry name" value="Integrin_B"/>
    <property type="match status" value="1"/>
</dbReference>
<dbReference type="PRINTS" id="PR01186">
    <property type="entry name" value="INTEGRINB"/>
</dbReference>
<dbReference type="SMART" id="SM00187">
    <property type="entry name" value="INB"/>
    <property type="match status" value="1"/>
</dbReference>
<dbReference type="SMART" id="SM00423">
    <property type="entry name" value="PSI"/>
    <property type="match status" value="1"/>
</dbReference>
<dbReference type="SUPFAM" id="SSF57196">
    <property type="entry name" value="EGF/Laminin"/>
    <property type="match status" value="2"/>
</dbReference>
<dbReference type="SUPFAM" id="SSF69179">
    <property type="entry name" value="Integrin domains"/>
    <property type="match status" value="1"/>
</dbReference>
<dbReference type="SUPFAM" id="SSF103575">
    <property type="entry name" value="Plexin repeat"/>
    <property type="match status" value="1"/>
</dbReference>
<dbReference type="SUPFAM" id="SSF53300">
    <property type="entry name" value="vWA-like"/>
    <property type="match status" value="1"/>
</dbReference>
<dbReference type="PROSITE" id="PS00022">
    <property type="entry name" value="EGF_1"/>
    <property type="match status" value="1"/>
</dbReference>
<dbReference type="PROSITE" id="PS01186">
    <property type="entry name" value="EGF_2"/>
    <property type="match status" value="1"/>
</dbReference>
<dbReference type="PROSITE" id="PS00243">
    <property type="entry name" value="I_EGF_1"/>
    <property type="match status" value="2"/>
</dbReference>
<dbReference type="PROSITE" id="PS52047">
    <property type="entry name" value="I_EGF_2"/>
    <property type="match status" value="3"/>
</dbReference>
<reference key="1">
    <citation type="journal article" date="1991" name="J. Biol. Chem.">
        <title>Cloning and expression of a divergent integrin subunit beta 8.</title>
        <authorList>
            <person name="Moyle M."/>
            <person name="Napier M.A."/>
            <person name="McLean J.W."/>
        </authorList>
    </citation>
    <scope>NUCLEOTIDE SEQUENCE [MRNA] (ISOFORM 1)</scope>
    <scope>FUNCTION</scope>
    <scope>INTERACTION WITH ITGAV</scope>
    <scope>SUBCELLULAR LOCATION</scope>
    <scope>TISSUE SPECIFICITY</scope>
    <source>
        <tissue>Placenta</tissue>
    </source>
</reference>
<reference key="2">
    <citation type="journal article" date="2004" name="Nat. Genet.">
        <title>Complete sequencing and characterization of 21,243 full-length human cDNAs.</title>
        <authorList>
            <person name="Ota T."/>
            <person name="Suzuki Y."/>
            <person name="Nishikawa T."/>
            <person name="Otsuki T."/>
            <person name="Sugiyama T."/>
            <person name="Irie R."/>
            <person name="Wakamatsu A."/>
            <person name="Hayashi K."/>
            <person name="Sato H."/>
            <person name="Nagai K."/>
            <person name="Kimura K."/>
            <person name="Makita H."/>
            <person name="Sekine M."/>
            <person name="Obayashi M."/>
            <person name="Nishi T."/>
            <person name="Shibahara T."/>
            <person name="Tanaka T."/>
            <person name="Ishii S."/>
            <person name="Yamamoto J."/>
            <person name="Saito K."/>
            <person name="Kawai Y."/>
            <person name="Isono Y."/>
            <person name="Nakamura Y."/>
            <person name="Nagahari K."/>
            <person name="Murakami K."/>
            <person name="Yasuda T."/>
            <person name="Iwayanagi T."/>
            <person name="Wagatsuma M."/>
            <person name="Shiratori A."/>
            <person name="Sudo H."/>
            <person name="Hosoiri T."/>
            <person name="Kaku Y."/>
            <person name="Kodaira H."/>
            <person name="Kondo H."/>
            <person name="Sugawara M."/>
            <person name="Takahashi M."/>
            <person name="Kanda K."/>
            <person name="Yokoi T."/>
            <person name="Furuya T."/>
            <person name="Kikkawa E."/>
            <person name="Omura Y."/>
            <person name="Abe K."/>
            <person name="Kamihara K."/>
            <person name="Katsuta N."/>
            <person name="Sato K."/>
            <person name="Tanikawa M."/>
            <person name="Yamazaki M."/>
            <person name="Ninomiya K."/>
            <person name="Ishibashi T."/>
            <person name="Yamashita H."/>
            <person name="Murakawa K."/>
            <person name="Fujimori K."/>
            <person name="Tanai H."/>
            <person name="Kimata M."/>
            <person name="Watanabe M."/>
            <person name="Hiraoka S."/>
            <person name="Chiba Y."/>
            <person name="Ishida S."/>
            <person name="Ono Y."/>
            <person name="Takiguchi S."/>
            <person name="Watanabe S."/>
            <person name="Yosida M."/>
            <person name="Hotuta T."/>
            <person name="Kusano J."/>
            <person name="Kanehori K."/>
            <person name="Takahashi-Fujii A."/>
            <person name="Hara H."/>
            <person name="Tanase T.-O."/>
            <person name="Nomura Y."/>
            <person name="Togiya S."/>
            <person name="Komai F."/>
            <person name="Hara R."/>
            <person name="Takeuchi K."/>
            <person name="Arita M."/>
            <person name="Imose N."/>
            <person name="Musashino K."/>
            <person name="Yuuki H."/>
            <person name="Oshima A."/>
            <person name="Sasaki N."/>
            <person name="Aotsuka S."/>
            <person name="Yoshikawa Y."/>
            <person name="Matsunawa H."/>
            <person name="Ichihara T."/>
            <person name="Shiohata N."/>
            <person name="Sano S."/>
            <person name="Moriya S."/>
            <person name="Momiyama H."/>
            <person name="Satoh N."/>
            <person name="Takami S."/>
            <person name="Terashima Y."/>
            <person name="Suzuki O."/>
            <person name="Nakagawa S."/>
            <person name="Senoh A."/>
            <person name="Mizoguchi H."/>
            <person name="Goto Y."/>
            <person name="Shimizu F."/>
            <person name="Wakebe H."/>
            <person name="Hishigaki H."/>
            <person name="Watanabe T."/>
            <person name="Sugiyama A."/>
            <person name="Takemoto M."/>
            <person name="Kawakami B."/>
            <person name="Yamazaki M."/>
            <person name="Watanabe K."/>
            <person name="Kumagai A."/>
            <person name="Itakura S."/>
            <person name="Fukuzumi Y."/>
            <person name="Fujimori Y."/>
            <person name="Komiyama M."/>
            <person name="Tashiro H."/>
            <person name="Tanigami A."/>
            <person name="Fujiwara T."/>
            <person name="Ono T."/>
            <person name="Yamada K."/>
            <person name="Fujii Y."/>
            <person name="Ozaki K."/>
            <person name="Hirao M."/>
            <person name="Ohmori Y."/>
            <person name="Kawabata A."/>
            <person name="Hikiji T."/>
            <person name="Kobatake N."/>
            <person name="Inagaki H."/>
            <person name="Ikema Y."/>
            <person name="Okamoto S."/>
            <person name="Okitani R."/>
            <person name="Kawakami T."/>
            <person name="Noguchi S."/>
            <person name="Itoh T."/>
            <person name="Shigeta K."/>
            <person name="Senba T."/>
            <person name="Matsumura K."/>
            <person name="Nakajima Y."/>
            <person name="Mizuno T."/>
            <person name="Morinaga M."/>
            <person name="Sasaki M."/>
            <person name="Togashi T."/>
            <person name="Oyama M."/>
            <person name="Hata H."/>
            <person name="Watanabe M."/>
            <person name="Komatsu T."/>
            <person name="Mizushima-Sugano J."/>
            <person name="Satoh T."/>
            <person name="Shirai Y."/>
            <person name="Takahashi Y."/>
            <person name="Nakagawa K."/>
            <person name="Okumura K."/>
            <person name="Nagase T."/>
            <person name="Nomura N."/>
            <person name="Kikuchi H."/>
            <person name="Masuho Y."/>
            <person name="Yamashita R."/>
            <person name="Nakai K."/>
            <person name="Yada T."/>
            <person name="Nakamura Y."/>
            <person name="Ohara O."/>
            <person name="Isogai T."/>
            <person name="Sugano S."/>
        </authorList>
    </citation>
    <scope>NUCLEOTIDE SEQUENCE [LARGE SCALE MRNA] (ISOFORM 2)</scope>
    <source>
        <tissue>Brain</tissue>
    </source>
</reference>
<reference key="3">
    <citation type="journal article" date="2003" name="Nature">
        <title>The DNA sequence of human chromosome 7.</title>
        <authorList>
            <person name="Hillier L.W."/>
            <person name="Fulton R.S."/>
            <person name="Fulton L.A."/>
            <person name="Graves T.A."/>
            <person name="Pepin K.H."/>
            <person name="Wagner-McPherson C."/>
            <person name="Layman D."/>
            <person name="Maas J."/>
            <person name="Jaeger S."/>
            <person name="Walker R."/>
            <person name="Wylie K."/>
            <person name="Sekhon M."/>
            <person name="Becker M.C."/>
            <person name="O'Laughlin M.D."/>
            <person name="Schaller M.E."/>
            <person name="Fewell G.A."/>
            <person name="Delehaunty K.D."/>
            <person name="Miner T.L."/>
            <person name="Nash W.E."/>
            <person name="Cordes M."/>
            <person name="Du H."/>
            <person name="Sun H."/>
            <person name="Edwards J."/>
            <person name="Bradshaw-Cordum H."/>
            <person name="Ali J."/>
            <person name="Andrews S."/>
            <person name="Isak A."/>
            <person name="Vanbrunt A."/>
            <person name="Nguyen C."/>
            <person name="Du F."/>
            <person name="Lamar B."/>
            <person name="Courtney L."/>
            <person name="Kalicki J."/>
            <person name="Ozersky P."/>
            <person name="Bielicki L."/>
            <person name="Scott K."/>
            <person name="Holmes A."/>
            <person name="Harkins R."/>
            <person name="Harris A."/>
            <person name="Strong C.M."/>
            <person name="Hou S."/>
            <person name="Tomlinson C."/>
            <person name="Dauphin-Kohlberg S."/>
            <person name="Kozlowicz-Reilly A."/>
            <person name="Leonard S."/>
            <person name="Rohlfing T."/>
            <person name="Rock S.M."/>
            <person name="Tin-Wollam A.-M."/>
            <person name="Abbott A."/>
            <person name="Minx P."/>
            <person name="Maupin R."/>
            <person name="Strowmatt C."/>
            <person name="Latreille P."/>
            <person name="Miller N."/>
            <person name="Johnson D."/>
            <person name="Murray J."/>
            <person name="Woessner J.P."/>
            <person name="Wendl M.C."/>
            <person name="Yang S.-P."/>
            <person name="Schultz B.R."/>
            <person name="Wallis J.W."/>
            <person name="Spieth J."/>
            <person name="Bieri T.A."/>
            <person name="Nelson J.O."/>
            <person name="Berkowicz N."/>
            <person name="Wohldmann P.E."/>
            <person name="Cook L.L."/>
            <person name="Hickenbotham M.T."/>
            <person name="Eldred J."/>
            <person name="Williams D."/>
            <person name="Bedell J.A."/>
            <person name="Mardis E.R."/>
            <person name="Clifton S.W."/>
            <person name="Chissoe S.L."/>
            <person name="Marra M.A."/>
            <person name="Raymond C."/>
            <person name="Haugen E."/>
            <person name="Gillett W."/>
            <person name="Zhou Y."/>
            <person name="James R."/>
            <person name="Phelps K."/>
            <person name="Iadanoto S."/>
            <person name="Bubb K."/>
            <person name="Simms E."/>
            <person name="Levy R."/>
            <person name="Clendenning J."/>
            <person name="Kaul R."/>
            <person name="Kent W.J."/>
            <person name="Furey T.S."/>
            <person name="Baertsch R.A."/>
            <person name="Brent M.R."/>
            <person name="Keibler E."/>
            <person name="Flicek P."/>
            <person name="Bork P."/>
            <person name="Suyama M."/>
            <person name="Bailey J.A."/>
            <person name="Portnoy M.E."/>
            <person name="Torrents D."/>
            <person name="Chinwalla A.T."/>
            <person name="Gish W.R."/>
            <person name="Eddy S.R."/>
            <person name="McPherson J.D."/>
            <person name="Olson M.V."/>
            <person name="Eichler E.E."/>
            <person name="Green E.D."/>
            <person name="Waterston R.H."/>
            <person name="Wilson R.K."/>
        </authorList>
    </citation>
    <scope>NUCLEOTIDE SEQUENCE [LARGE SCALE GENOMIC DNA]</scope>
</reference>
<reference key="4">
    <citation type="journal article" date="2003" name="Science">
        <title>Human chromosome 7: DNA sequence and biology.</title>
        <authorList>
            <person name="Scherer S.W."/>
            <person name="Cheung J."/>
            <person name="MacDonald J.R."/>
            <person name="Osborne L.R."/>
            <person name="Nakabayashi K."/>
            <person name="Herbrick J.-A."/>
            <person name="Carson A.R."/>
            <person name="Parker-Katiraee L."/>
            <person name="Skaug J."/>
            <person name="Khaja R."/>
            <person name="Zhang J."/>
            <person name="Hudek A.K."/>
            <person name="Li M."/>
            <person name="Haddad M."/>
            <person name="Duggan G.E."/>
            <person name="Fernandez B.A."/>
            <person name="Kanematsu E."/>
            <person name="Gentles S."/>
            <person name="Christopoulos C.C."/>
            <person name="Choufani S."/>
            <person name="Kwasnicka D."/>
            <person name="Zheng X.H."/>
            <person name="Lai Z."/>
            <person name="Nusskern D.R."/>
            <person name="Zhang Q."/>
            <person name="Gu Z."/>
            <person name="Lu F."/>
            <person name="Zeesman S."/>
            <person name="Nowaczyk M.J."/>
            <person name="Teshima I."/>
            <person name="Chitayat D."/>
            <person name="Shuman C."/>
            <person name="Weksberg R."/>
            <person name="Zackai E.H."/>
            <person name="Grebe T.A."/>
            <person name="Cox S.R."/>
            <person name="Kirkpatrick S.J."/>
            <person name="Rahman N."/>
            <person name="Friedman J.M."/>
            <person name="Heng H.H.Q."/>
            <person name="Pelicci P.G."/>
            <person name="Lo-Coco F."/>
            <person name="Belloni E."/>
            <person name="Shaffer L.G."/>
            <person name="Pober B."/>
            <person name="Morton C.C."/>
            <person name="Gusella J.F."/>
            <person name="Bruns G.A.P."/>
            <person name="Korf B.R."/>
            <person name="Quade B.J."/>
            <person name="Ligon A.H."/>
            <person name="Ferguson H."/>
            <person name="Higgins A.W."/>
            <person name="Leach N.T."/>
            <person name="Herrick S.R."/>
            <person name="Lemyre E."/>
            <person name="Farra C.G."/>
            <person name="Kim H.-G."/>
            <person name="Summers A.M."/>
            <person name="Gripp K.W."/>
            <person name="Roberts W."/>
            <person name="Szatmari P."/>
            <person name="Winsor E.J.T."/>
            <person name="Grzeschik K.-H."/>
            <person name="Teebi A."/>
            <person name="Minassian B.A."/>
            <person name="Kere J."/>
            <person name="Armengol L."/>
            <person name="Pujana M.A."/>
            <person name="Estivill X."/>
            <person name="Wilson M.D."/>
            <person name="Koop B.F."/>
            <person name="Tosi S."/>
            <person name="Moore G.E."/>
            <person name="Boright A.P."/>
            <person name="Zlotorynski E."/>
            <person name="Kerem B."/>
            <person name="Kroisel P.M."/>
            <person name="Petek E."/>
            <person name="Oscier D.G."/>
            <person name="Mould S.J."/>
            <person name="Doehner H."/>
            <person name="Doehner K."/>
            <person name="Rommens J.M."/>
            <person name="Vincent J.B."/>
            <person name="Venter J.C."/>
            <person name="Li P.W."/>
            <person name="Mural R.J."/>
            <person name="Adams M.D."/>
            <person name="Tsui L.-C."/>
        </authorList>
    </citation>
    <scope>NUCLEOTIDE SEQUENCE [LARGE SCALE GENOMIC DNA]</scope>
</reference>
<reference key="5">
    <citation type="submission" date="2005-07" db="EMBL/GenBank/DDBJ databases">
        <authorList>
            <person name="Mural R.J."/>
            <person name="Istrail S."/>
            <person name="Sutton G.G."/>
            <person name="Florea L."/>
            <person name="Halpern A.L."/>
            <person name="Mobarry C.M."/>
            <person name="Lippert R."/>
            <person name="Walenz B."/>
            <person name="Shatkay H."/>
            <person name="Dew I."/>
            <person name="Miller J.R."/>
            <person name="Flanigan M.J."/>
            <person name="Edwards N.J."/>
            <person name="Bolanos R."/>
            <person name="Fasulo D."/>
            <person name="Halldorsson B.V."/>
            <person name="Hannenhalli S."/>
            <person name="Turner R."/>
            <person name="Yooseph S."/>
            <person name="Lu F."/>
            <person name="Nusskern D.R."/>
            <person name="Shue B.C."/>
            <person name="Zheng X.H."/>
            <person name="Zhong F."/>
            <person name="Delcher A.L."/>
            <person name="Huson D.H."/>
            <person name="Kravitz S.A."/>
            <person name="Mouchard L."/>
            <person name="Reinert K."/>
            <person name="Remington K.A."/>
            <person name="Clark A.G."/>
            <person name="Waterman M.S."/>
            <person name="Eichler E.E."/>
            <person name="Adams M.D."/>
            <person name="Hunkapiller M.W."/>
            <person name="Myers E.W."/>
            <person name="Venter J.C."/>
        </authorList>
    </citation>
    <scope>NUCLEOTIDE SEQUENCE [LARGE SCALE GENOMIC DNA]</scope>
</reference>
<reference key="6">
    <citation type="journal article" date="2012" name="Mol. Biol. Cell">
        <title>GARP regulates the bioavailability and activation of TGFbeta.</title>
        <authorList>
            <person name="Wang R."/>
            <person name="Zhu J."/>
            <person name="Dong X."/>
            <person name="Shi M."/>
            <person name="Lu C."/>
            <person name="Springer T.A."/>
        </authorList>
    </citation>
    <scope>FUNCTION</scope>
    <scope>INTERACTION WITH TGFB1</scope>
</reference>
<reference evidence="13 14" key="7">
    <citation type="journal article" date="2019" name="Nat. Commun.">
        <title>General structural features that regulate integrin affinity revealed by atypical alphaVbeta8.</title>
        <authorList>
            <person name="Wang J."/>
            <person name="Su Y."/>
            <person name="Iacob R.E."/>
            <person name="Engen J.R."/>
            <person name="Springer T.A."/>
        </authorList>
    </citation>
    <scope>X-RAY CRYSTALLOGRAPHY (2.66 ANGSTROMS) OF 43-498 IN COMPLEX WITH ITGAV; TGFB1 PEPTIDE; CALCIUM AND MAGNESIUM</scope>
    <scope>DOMAIN</scope>
    <scope>DISULFIDE BONDS</scope>
    <scope>GLYCOSYLATION AT ASN-402; ASN-421 AND ASN-431</scope>
</reference>
<protein>
    <recommendedName>
        <fullName evidence="9">Integrin beta-8</fullName>
    </recommendedName>
</protein>
<name>ITB8_HUMAN</name>
<sequence>MCGSALAFFTAAFVCLQNDRRGPASFLWAAWVFSLVLGLGQGEDNRCASSNAASCARCLALGPECGWCVQEDFISGGSRSERCDIVSNLISKGCSVDSIEYPSVHVIIPTENEINTQVTPGEVSIQLRPGAEANFMLKVHPLKKYPVDLYYLVDVSASMHNNIEKLNSVGNDLSRKMAFFSRDFRLGFGSYVDKTVSPYISIHPERIHNQCSDYNLDCMPPHGYIHVLSLTENITEFEKAVHRQKISGNIDTPEGGFDAMLQAAVCESHIGWRKEAKRLLLVMTDQTSHLALDSKLAGIVVPNDGNCHLKNNVYVKSTTMEHPSLGQLSEKLIDNNINVIFAVQGKQFHWYKDLLPLLPGTIAGEIESKAANLNNLVVEAYQKLISEVKVQVENQVQGIYFNITAICPDGSRKPGMEGCRNVTSNDEVLFNVTVTMKKCDVTGGKNYAIIKPIGFNETAKIHIHRNCSCQCEDNRGPKGKCVDETFLDSKCFQCDENKCHFDEDQFSSESCKSHKDQPVCSGRGVCVCGKCSCHKIKLGKVYGKYCEKDDFSCPYHHGNLCAGHGECEAGRCQCFSGWEGDRCQCPSAAAQHCVNSKGQVCSGRGTCVCGRCECTDPRSIGRFCEHCPTCYTACKENWNCMQCLHPHNLSQAILDQCKTSCALMEQQHYVDQTSECFSSPSYLRIFFIIFIVTFLIGLLKVLIIRQVILQWNSNKIKSSSDYRVSASKKDKLILQSVCTRAVTYRREKPEEIKMDISKLNAHETFRCNF</sequence>